<sequence>MHPISGAPAQPPGEGRNPLSAASEQPLSMQQRTVLERLITRLISLTQQQSAEVWAGMKHDLGIKNDAPLLSRHFPAAEQNLTQRLGVAQQNHANRQVLSQLTELLGVGNNRQAVSDFIRQQYGQTALSQLTPDQLKNVLTLLQQGQLSIPQPQQRPATDRPLLPAEHNTLNQLVTKLAAATGESNKLIWQSMLELSGVKSGELIPAKQFTHLATWLQARQTLSLQHAPTLHTLQAALKQPLEPDELTAIKEYAQHTYQIQPQTVLTTAQVQDLLNHIFLRRVEREADELEPLSIQPIYRPFAPMIETVKNLSARPGLLFIALIIVLALFWLVS</sequence>
<proteinExistence type="evidence at protein level"/>
<dbReference type="EMBL" id="U77618">
    <property type="protein sequence ID" value="AAB51501.1"/>
    <property type="molecule type" value="Genomic_DNA"/>
</dbReference>
<dbReference type="EMBL" id="AE006468">
    <property type="protein sequence ID" value="AAL21272.1"/>
    <property type="molecule type" value="Genomic_DNA"/>
</dbReference>
<dbReference type="RefSeq" id="NP_461313.1">
    <property type="nucleotide sequence ID" value="NC_003197.2"/>
</dbReference>
<dbReference type="RefSeq" id="WP_000553395.1">
    <property type="nucleotide sequence ID" value="NC_003197.2"/>
</dbReference>
<dbReference type="STRING" id="99287.STM2371"/>
<dbReference type="PaxDb" id="99287-STM2371"/>
<dbReference type="GeneID" id="1253893"/>
<dbReference type="KEGG" id="stm:STM2371"/>
<dbReference type="PATRIC" id="fig|99287.12.peg.2510"/>
<dbReference type="HOGENOM" id="CLU_063700_0_0_6"/>
<dbReference type="OMA" id="FTHLVTW"/>
<dbReference type="PhylomeDB" id="Q7CQ37"/>
<dbReference type="BioCyc" id="SENT99287:STM2371-MONOMER"/>
<dbReference type="Proteomes" id="UP000001014">
    <property type="component" value="Chromosome"/>
</dbReference>
<dbReference type="GO" id="GO:0005886">
    <property type="term" value="C:plasma membrane"/>
    <property type="evidence" value="ECO:0007669"/>
    <property type="project" value="UniProtKB-SubCell"/>
</dbReference>
<dbReference type="GO" id="GO:0010468">
    <property type="term" value="P:regulation of gene expression"/>
    <property type="evidence" value="ECO:0007669"/>
    <property type="project" value="InterPro"/>
</dbReference>
<dbReference type="InterPro" id="IPR023597">
    <property type="entry name" value="Flagellar_regulator_Flk"/>
</dbReference>
<dbReference type="NCBIfam" id="NF007987">
    <property type="entry name" value="PRK10715.1"/>
    <property type="match status" value="1"/>
</dbReference>
<dbReference type="PIRSF" id="PIRSF020588">
    <property type="entry name" value="Flk"/>
    <property type="match status" value="1"/>
</dbReference>
<name>FLK_SALTY</name>
<comment type="function">
    <text evidence="3 4 5 6">Acts as a regulator of flagellar gene expression by modulating the protein level of the anti sigma factor FlgM upon sensing ring completion or hook elongation. Flk could inhibit FlgM secretion by acting as a braking system for the flagellar-associated type III secretion (T3S) system. Plays a role in hindering to flip the flagellar T3S specificity switch from the rod and hook-type substrates to filament-type substrates prior to hook-basal body (HBB) completion possibly by preventing interaction of FliK with FlhB.</text>
</comment>
<comment type="subcellular location">
    <subcellularLocation>
        <location evidence="7">Cell inner membrane</location>
        <topology evidence="7">Single-pass membrane protein</topology>
    </subcellularLocation>
</comment>
<comment type="similarity">
    <text evidence="7">Belongs to the flk family.</text>
</comment>
<reference key="1">
    <citation type="journal article" date="1997" name="J. Bacteriol.">
        <title>The flk gene of Salmonella typhimurium couples flagellar P- and L-ring assembly to flagellar morphogenesis.</title>
        <authorList>
            <person name="Karlinsey J.E."/>
            <person name="Pease A.J."/>
            <person name="Winkler M.E."/>
            <person name="Bailey J.L."/>
            <person name="Hughes K.T."/>
        </authorList>
    </citation>
    <scope>NUCLEOTIDE SEQUENCE [GENOMIC DNA]</scope>
    <scope>GENE NAME</scope>
    <scope>FUNCTION</scope>
</reference>
<reference key="2">
    <citation type="journal article" date="2001" name="Nature">
        <title>Complete genome sequence of Salmonella enterica serovar Typhimurium LT2.</title>
        <authorList>
            <person name="McClelland M."/>
            <person name="Sanderson K.E."/>
            <person name="Spieth J."/>
            <person name="Clifton S.W."/>
            <person name="Latreille P."/>
            <person name="Courtney L."/>
            <person name="Porwollik S."/>
            <person name="Ali J."/>
            <person name="Dante M."/>
            <person name="Du F."/>
            <person name="Hou S."/>
            <person name="Layman D."/>
            <person name="Leonard S."/>
            <person name="Nguyen C."/>
            <person name="Scott K."/>
            <person name="Holmes A."/>
            <person name="Grewal N."/>
            <person name="Mulvaney E."/>
            <person name="Ryan E."/>
            <person name="Sun H."/>
            <person name="Florea L."/>
            <person name="Miller W."/>
            <person name="Stoneking T."/>
            <person name="Nhan M."/>
            <person name="Waterston R."/>
            <person name="Wilson R.K."/>
        </authorList>
    </citation>
    <scope>NUCLEOTIDE SEQUENCE [LARGE SCALE GENOMIC DNA]</scope>
    <source>
        <strain>LT2 / SGSC1412 / ATCC 700720</strain>
    </source>
</reference>
<reference key="3">
    <citation type="journal article" date="1998" name="J. Bacteriol.">
        <title>Flk couples flgM translation to flagellar ring assembly in Salmonella typhimurium.</title>
        <authorList>
            <person name="Karlinsey J.E."/>
            <person name="Tsui H.-C."/>
            <person name="Winkler M.E."/>
            <person name="Hughes K.T."/>
        </authorList>
    </citation>
    <scope>FUNCTION IN FLAGELLA ASSEMBLY</scope>
</reference>
<reference key="4">
    <citation type="journal article" date="2006" name="Mol. Microbiol.">
        <title>Flk prevents premature secretion of the anti-sigma factor FlgM into the periplasm.</title>
        <authorList>
            <person name="Aldridge P."/>
            <person name="Karlinsey J.E."/>
            <person name="Becker E."/>
            <person name="Chevance F.F."/>
            <person name="Hughes K.T."/>
        </authorList>
    </citation>
    <scope>FUNCTION IN FLGM REGULATION</scope>
</reference>
<reference key="5">
    <citation type="journal article" date="2009" name="J. Bacteriol.">
        <title>Mutations in flk, flgG, flhA, and flhE that affect the flagellar type III secretion specificity switch in Salmonella enterica.</title>
        <authorList>
            <person name="Hirano T."/>
            <person name="Mizuno S."/>
            <person name="Aizawa S."/>
            <person name="Hughes K.T."/>
        </authorList>
    </citation>
    <scope>FUNCTION</scope>
</reference>
<organism>
    <name type="scientific">Salmonella typhimurium (strain LT2 / SGSC1412 / ATCC 700720)</name>
    <dbReference type="NCBI Taxonomy" id="99287"/>
    <lineage>
        <taxon>Bacteria</taxon>
        <taxon>Pseudomonadati</taxon>
        <taxon>Pseudomonadota</taxon>
        <taxon>Gammaproteobacteria</taxon>
        <taxon>Enterobacterales</taxon>
        <taxon>Enterobacteriaceae</taxon>
        <taxon>Salmonella</taxon>
    </lineage>
</organism>
<feature type="chain" id="PRO_0000315226" description="Flagellar regulator flk">
    <location>
        <begin position="1"/>
        <end position="333"/>
    </location>
</feature>
<feature type="topological domain" description="Cytoplasmic" evidence="1">
    <location>
        <begin position="1"/>
        <end position="311"/>
    </location>
</feature>
<feature type="transmembrane region" description="Helical" evidence="1">
    <location>
        <begin position="312"/>
        <end position="332"/>
    </location>
</feature>
<feature type="topological domain" description="Periplasmic" evidence="1">
    <location>
        <position position="333"/>
    </location>
</feature>
<feature type="region of interest" description="Disordered" evidence="2">
    <location>
        <begin position="1"/>
        <end position="27"/>
    </location>
</feature>
<evidence type="ECO:0000255" key="1"/>
<evidence type="ECO:0000256" key="2">
    <source>
        <dbReference type="SAM" id="MobiDB-lite"/>
    </source>
</evidence>
<evidence type="ECO:0000269" key="3">
    <source>
    </source>
</evidence>
<evidence type="ECO:0000269" key="4">
    <source>
    </source>
</evidence>
<evidence type="ECO:0000269" key="5">
    <source>
    </source>
</evidence>
<evidence type="ECO:0000269" key="6">
    <source>
    </source>
</evidence>
<evidence type="ECO:0000305" key="7"/>
<keyword id="KW-0997">Cell inner membrane</keyword>
<keyword id="KW-1003">Cell membrane</keyword>
<keyword id="KW-0472">Membrane</keyword>
<keyword id="KW-1185">Reference proteome</keyword>
<keyword id="KW-0812">Transmembrane</keyword>
<keyword id="KW-1133">Transmembrane helix</keyword>
<protein>
    <recommendedName>
        <fullName>Flagellar regulator flk</fullName>
    </recommendedName>
    <alternativeName>
        <fullName>Fluke</fullName>
    </alternativeName>
</protein>
<accession>Q7CQ37</accession>
<accession>Q79BI3</accession>
<gene>
    <name type="primary">flk</name>
    <name type="ordered locus">STM2371</name>
</gene>